<dbReference type="EMBL" id="CP001280">
    <property type="protein sequence ID" value="ACK49552.1"/>
    <property type="molecule type" value="Genomic_DNA"/>
</dbReference>
<dbReference type="RefSeq" id="WP_012589622.1">
    <property type="nucleotide sequence ID" value="NC_011666.1"/>
</dbReference>
<dbReference type="SMR" id="B8ELG3"/>
<dbReference type="STRING" id="395965.Msil_0580"/>
<dbReference type="KEGG" id="msl:Msil_0580"/>
<dbReference type="eggNOG" id="COG0087">
    <property type="taxonomic scope" value="Bacteria"/>
</dbReference>
<dbReference type="HOGENOM" id="CLU_044142_2_0_5"/>
<dbReference type="OrthoDB" id="9806135at2"/>
<dbReference type="Proteomes" id="UP000002257">
    <property type="component" value="Chromosome"/>
</dbReference>
<dbReference type="GO" id="GO:0022625">
    <property type="term" value="C:cytosolic large ribosomal subunit"/>
    <property type="evidence" value="ECO:0007669"/>
    <property type="project" value="TreeGrafter"/>
</dbReference>
<dbReference type="GO" id="GO:0019843">
    <property type="term" value="F:rRNA binding"/>
    <property type="evidence" value="ECO:0007669"/>
    <property type="project" value="UniProtKB-UniRule"/>
</dbReference>
<dbReference type="GO" id="GO:0003735">
    <property type="term" value="F:structural constituent of ribosome"/>
    <property type="evidence" value="ECO:0007669"/>
    <property type="project" value="InterPro"/>
</dbReference>
<dbReference type="GO" id="GO:0006412">
    <property type="term" value="P:translation"/>
    <property type="evidence" value="ECO:0007669"/>
    <property type="project" value="UniProtKB-UniRule"/>
</dbReference>
<dbReference type="FunFam" id="2.40.30.10:FF:000004">
    <property type="entry name" value="50S ribosomal protein L3"/>
    <property type="match status" value="1"/>
</dbReference>
<dbReference type="FunFam" id="3.30.160.810:FF:000001">
    <property type="entry name" value="50S ribosomal protein L3"/>
    <property type="match status" value="1"/>
</dbReference>
<dbReference type="Gene3D" id="3.30.160.810">
    <property type="match status" value="1"/>
</dbReference>
<dbReference type="Gene3D" id="2.40.30.10">
    <property type="entry name" value="Translation factors"/>
    <property type="match status" value="1"/>
</dbReference>
<dbReference type="HAMAP" id="MF_01325_B">
    <property type="entry name" value="Ribosomal_uL3_B"/>
    <property type="match status" value="1"/>
</dbReference>
<dbReference type="InterPro" id="IPR000597">
    <property type="entry name" value="Ribosomal_uL3"/>
</dbReference>
<dbReference type="InterPro" id="IPR019927">
    <property type="entry name" value="Ribosomal_uL3_bac/org-type"/>
</dbReference>
<dbReference type="InterPro" id="IPR019926">
    <property type="entry name" value="Ribosomal_uL3_CS"/>
</dbReference>
<dbReference type="InterPro" id="IPR009000">
    <property type="entry name" value="Transl_B-barrel_sf"/>
</dbReference>
<dbReference type="NCBIfam" id="TIGR03625">
    <property type="entry name" value="L3_bact"/>
    <property type="match status" value="1"/>
</dbReference>
<dbReference type="PANTHER" id="PTHR11229">
    <property type="entry name" value="50S RIBOSOMAL PROTEIN L3"/>
    <property type="match status" value="1"/>
</dbReference>
<dbReference type="PANTHER" id="PTHR11229:SF16">
    <property type="entry name" value="LARGE RIBOSOMAL SUBUNIT PROTEIN UL3C"/>
    <property type="match status" value="1"/>
</dbReference>
<dbReference type="Pfam" id="PF00297">
    <property type="entry name" value="Ribosomal_L3"/>
    <property type="match status" value="1"/>
</dbReference>
<dbReference type="SUPFAM" id="SSF50447">
    <property type="entry name" value="Translation proteins"/>
    <property type="match status" value="1"/>
</dbReference>
<dbReference type="PROSITE" id="PS00474">
    <property type="entry name" value="RIBOSOMAL_L3"/>
    <property type="match status" value="1"/>
</dbReference>
<sequence>MRSGVIAQKLGMTRVFNDGGEHVPVTVLKLDGCQVVAHRTKERNGYTALQLGIGRAKVKNVSKAERGRFAIAEVEPKLKLAEFRVEESDLLPVGAEITADHFVVGQFVDVTGTSIGKGFAGPMKRWNFGGLRATHGVSLSHRSHGSTGGRQDPGKTFKNKKMAGHMGAERVTTLNLKVVQLDIERGLILVEGAVPGVAGGWIQVRDAIKRALPKDAPQPGKYRLANSAAPQPAEADAASDTGAQA</sequence>
<accession>B8ELG3</accession>
<organism>
    <name type="scientific">Methylocella silvestris (strain DSM 15510 / CIP 108128 / LMG 27833 / NCIMB 13906 / BL2)</name>
    <dbReference type="NCBI Taxonomy" id="395965"/>
    <lineage>
        <taxon>Bacteria</taxon>
        <taxon>Pseudomonadati</taxon>
        <taxon>Pseudomonadota</taxon>
        <taxon>Alphaproteobacteria</taxon>
        <taxon>Hyphomicrobiales</taxon>
        <taxon>Beijerinckiaceae</taxon>
        <taxon>Methylocella</taxon>
    </lineage>
</organism>
<keyword id="KW-0488">Methylation</keyword>
<keyword id="KW-1185">Reference proteome</keyword>
<keyword id="KW-0687">Ribonucleoprotein</keyword>
<keyword id="KW-0689">Ribosomal protein</keyword>
<keyword id="KW-0694">RNA-binding</keyword>
<keyword id="KW-0699">rRNA-binding</keyword>
<evidence type="ECO:0000255" key="1">
    <source>
        <dbReference type="HAMAP-Rule" id="MF_01325"/>
    </source>
</evidence>
<evidence type="ECO:0000256" key="2">
    <source>
        <dbReference type="SAM" id="MobiDB-lite"/>
    </source>
</evidence>
<evidence type="ECO:0000305" key="3"/>
<reference key="1">
    <citation type="journal article" date="2010" name="J. Bacteriol.">
        <title>Complete genome sequence of the aerobic facultative methanotroph Methylocella silvestris BL2.</title>
        <authorList>
            <person name="Chen Y."/>
            <person name="Crombie A."/>
            <person name="Rahman M.T."/>
            <person name="Dedysh S.N."/>
            <person name="Liesack W."/>
            <person name="Stott M.B."/>
            <person name="Alam M."/>
            <person name="Theisen A.R."/>
            <person name="Murrell J.C."/>
            <person name="Dunfield P.F."/>
        </authorList>
    </citation>
    <scope>NUCLEOTIDE SEQUENCE [LARGE SCALE GENOMIC DNA]</scope>
    <source>
        <strain>DSM 15510 / CIP 108128 / LMG 27833 / NCIMB 13906 / BL2</strain>
    </source>
</reference>
<gene>
    <name evidence="1" type="primary">rplC</name>
    <name type="ordered locus">Msil_0580</name>
</gene>
<comment type="function">
    <text evidence="1">One of the primary rRNA binding proteins, it binds directly near the 3'-end of the 23S rRNA, where it nucleates assembly of the 50S subunit.</text>
</comment>
<comment type="subunit">
    <text evidence="1">Part of the 50S ribosomal subunit. Forms a cluster with proteins L14 and L19.</text>
</comment>
<comment type="PTM">
    <text evidence="1">Methylated by PrmB.</text>
</comment>
<comment type="similarity">
    <text evidence="1">Belongs to the universal ribosomal protein uL3 family.</text>
</comment>
<name>RL3_METSB</name>
<proteinExistence type="inferred from homology"/>
<protein>
    <recommendedName>
        <fullName evidence="1">Large ribosomal subunit protein uL3</fullName>
    </recommendedName>
    <alternativeName>
        <fullName evidence="3">50S ribosomal protein L3</fullName>
    </alternativeName>
</protein>
<feature type="chain" id="PRO_1000165896" description="Large ribosomal subunit protein uL3">
    <location>
        <begin position="1"/>
        <end position="245"/>
    </location>
</feature>
<feature type="region of interest" description="Disordered" evidence="2">
    <location>
        <begin position="214"/>
        <end position="245"/>
    </location>
</feature>
<feature type="compositionally biased region" description="Low complexity" evidence="2">
    <location>
        <begin position="225"/>
        <end position="245"/>
    </location>
</feature>
<feature type="modified residue" description="N5-methylglutamine" evidence="1">
    <location>
        <position position="151"/>
    </location>
</feature>